<evidence type="ECO:0000255" key="1">
    <source>
        <dbReference type="HAMAP-Rule" id="MF_01325"/>
    </source>
</evidence>
<evidence type="ECO:0000256" key="2">
    <source>
        <dbReference type="SAM" id="MobiDB-lite"/>
    </source>
</evidence>
<evidence type="ECO:0000305" key="3"/>
<gene>
    <name evidence="1" type="primary">rplC</name>
    <name type="ordered locus">Bsph_4614</name>
</gene>
<keyword id="KW-0687">Ribonucleoprotein</keyword>
<keyword id="KW-0689">Ribosomal protein</keyword>
<keyword id="KW-0694">RNA-binding</keyword>
<keyword id="KW-0699">rRNA-binding</keyword>
<feature type="chain" id="PRO_1000141884" description="Large ribosomal subunit protein uL3">
    <location>
        <begin position="1"/>
        <end position="209"/>
    </location>
</feature>
<feature type="region of interest" description="Disordered" evidence="2">
    <location>
        <begin position="125"/>
        <end position="148"/>
    </location>
</feature>
<sequence length="209" mass="22808">MAKGILGRKIGMTQVFAENGDLIPVTVIEATPNVVLQKKTVETDGYEAIQVGFEDKRVKLSNKPQQGHVAKANTAPKRFIREFRNVNVEEYEVGQEVKVEIFAEGDVIDVTGVTKGKGFQGVIKRHGQSRGPMAHGSRYHRRPGSMGPVAPNRVFKQKKLPGQMGGNVVTIQNLEIVKVDTDRNLLLVKGNVPGSKKALVTVKTASKAK</sequence>
<name>RL3_LYSSC</name>
<proteinExistence type="inferred from homology"/>
<accession>B1HMY0</accession>
<reference key="1">
    <citation type="journal article" date="2008" name="J. Bacteriol.">
        <title>Complete genome sequence of the mosquitocidal bacterium Bacillus sphaericus C3-41 and comparison with those of closely related Bacillus species.</title>
        <authorList>
            <person name="Hu X."/>
            <person name="Fan W."/>
            <person name="Han B."/>
            <person name="Liu H."/>
            <person name="Zheng D."/>
            <person name="Li Q."/>
            <person name="Dong W."/>
            <person name="Yan J."/>
            <person name="Gao M."/>
            <person name="Berry C."/>
            <person name="Yuan Z."/>
        </authorList>
    </citation>
    <scope>NUCLEOTIDE SEQUENCE [LARGE SCALE GENOMIC DNA]</scope>
    <source>
        <strain>C3-41</strain>
    </source>
</reference>
<comment type="function">
    <text evidence="1">One of the primary rRNA binding proteins, it binds directly near the 3'-end of the 23S rRNA, where it nucleates assembly of the 50S subunit.</text>
</comment>
<comment type="subunit">
    <text evidence="1">Part of the 50S ribosomal subunit. Forms a cluster with proteins L14 and L19.</text>
</comment>
<comment type="similarity">
    <text evidence="1">Belongs to the universal ribosomal protein uL3 family.</text>
</comment>
<organism>
    <name type="scientific">Lysinibacillus sphaericus (strain C3-41)</name>
    <dbReference type="NCBI Taxonomy" id="444177"/>
    <lineage>
        <taxon>Bacteria</taxon>
        <taxon>Bacillati</taxon>
        <taxon>Bacillota</taxon>
        <taxon>Bacilli</taxon>
        <taxon>Bacillales</taxon>
        <taxon>Bacillaceae</taxon>
        <taxon>Lysinibacillus</taxon>
    </lineage>
</organism>
<protein>
    <recommendedName>
        <fullName evidence="1">Large ribosomal subunit protein uL3</fullName>
    </recommendedName>
    <alternativeName>
        <fullName evidence="3">50S ribosomal protein L3</fullName>
    </alternativeName>
</protein>
<dbReference type="EMBL" id="CP000817">
    <property type="protein sequence ID" value="ACA42058.1"/>
    <property type="molecule type" value="Genomic_DNA"/>
</dbReference>
<dbReference type="RefSeq" id="WP_012296063.1">
    <property type="nucleotide sequence ID" value="NC_010382.1"/>
</dbReference>
<dbReference type="SMR" id="B1HMY0"/>
<dbReference type="EnsemblBacteria" id="ACA42058">
    <property type="protein sequence ID" value="ACA42058"/>
    <property type="gene ID" value="Bsph_4614"/>
</dbReference>
<dbReference type="KEGG" id="lsp:Bsph_4614"/>
<dbReference type="HOGENOM" id="CLU_044142_4_1_9"/>
<dbReference type="Proteomes" id="UP000002164">
    <property type="component" value="Chromosome"/>
</dbReference>
<dbReference type="GO" id="GO:0022625">
    <property type="term" value="C:cytosolic large ribosomal subunit"/>
    <property type="evidence" value="ECO:0007669"/>
    <property type="project" value="TreeGrafter"/>
</dbReference>
<dbReference type="GO" id="GO:0019843">
    <property type="term" value="F:rRNA binding"/>
    <property type="evidence" value="ECO:0007669"/>
    <property type="project" value="UniProtKB-UniRule"/>
</dbReference>
<dbReference type="GO" id="GO:0003735">
    <property type="term" value="F:structural constituent of ribosome"/>
    <property type="evidence" value="ECO:0007669"/>
    <property type="project" value="InterPro"/>
</dbReference>
<dbReference type="GO" id="GO:0006412">
    <property type="term" value="P:translation"/>
    <property type="evidence" value="ECO:0007669"/>
    <property type="project" value="UniProtKB-UniRule"/>
</dbReference>
<dbReference type="FunFam" id="2.40.30.10:FF:000004">
    <property type="entry name" value="50S ribosomal protein L3"/>
    <property type="match status" value="1"/>
</dbReference>
<dbReference type="FunFam" id="3.30.160.810:FF:000002">
    <property type="entry name" value="50S ribosomal protein L3"/>
    <property type="match status" value="1"/>
</dbReference>
<dbReference type="Gene3D" id="3.30.160.810">
    <property type="match status" value="1"/>
</dbReference>
<dbReference type="Gene3D" id="2.40.30.10">
    <property type="entry name" value="Translation factors"/>
    <property type="match status" value="1"/>
</dbReference>
<dbReference type="HAMAP" id="MF_01325_B">
    <property type="entry name" value="Ribosomal_uL3_B"/>
    <property type="match status" value="1"/>
</dbReference>
<dbReference type="InterPro" id="IPR000597">
    <property type="entry name" value="Ribosomal_uL3"/>
</dbReference>
<dbReference type="InterPro" id="IPR019927">
    <property type="entry name" value="Ribosomal_uL3_bac/org-type"/>
</dbReference>
<dbReference type="InterPro" id="IPR019926">
    <property type="entry name" value="Ribosomal_uL3_CS"/>
</dbReference>
<dbReference type="InterPro" id="IPR009000">
    <property type="entry name" value="Transl_B-barrel_sf"/>
</dbReference>
<dbReference type="NCBIfam" id="TIGR03625">
    <property type="entry name" value="L3_bact"/>
    <property type="match status" value="1"/>
</dbReference>
<dbReference type="PANTHER" id="PTHR11229">
    <property type="entry name" value="50S RIBOSOMAL PROTEIN L3"/>
    <property type="match status" value="1"/>
</dbReference>
<dbReference type="PANTHER" id="PTHR11229:SF16">
    <property type="entry name" value="LARGE RIBOSOMAL SUBUNIT PROTEIN UL3C"/>
    <property type="match status" value="1"/>
</dbReference>
<dbReference type="Pfam" id="PF00297">
    <property type="entry name" value="Ribosomal_L3"/>
    <property type="match status" value="1"/>
</dbReference>
<dbReference type="SUPFAM" id="SSF50447">
    <property type="entry name" value="Translation proteins"/>
    <property type="match status" value="1"/>
</dbReference>
<dbReference type="PROSITE" id="PS00474">
    <property type="entry name" value="RIBOSOMAL_L3"/>
    <property type="match status" value="1"/>
</dbReference>